<feature type="chain" id="PRO_0000302586" description="Acyl-[acyl-carrier-protein]--UDP-N-acetylglucosamine O-acyltransferase">
    <location>
        <begin position="1"/>
        <end position="258"/>
    </location>
</feature>
<accession>Q1I638</accession>
<evidence type="ECO:0000255" key="1">
    <source>
        <dbReference type="HAMAP-Rule" id="MF_00387"/>
    </source>
</evidence>
<name>LPXA_PSEE4</name>
<gene>
    <name evidence="1" type="primary">lpxA</name>
    <name type="ordered locus">PSEEN4208</name>
</gene>
<reference key="1">
    <citation type="journal article" date="2006" name="Nat. Biotechnol.">
        <title>Complete genome sequence of the entomopathogenic and metabolically versatile soil bacterium Pseudomonas entomophila.</title>
        <authorList>
            <person name="Vodovar N."/>
            <person name="Vallenet D."/>
            <person name="Cruveiller S."/>
            <person name="Rouy Z."/>
            <person name="Barbe V."/>
            <person name="Acosta C."/>
            <person name="Cattolico L."/>
            <person name="Jubin C."/>
            <person name="Lajus A."/>
            <person name="Segurens B."/>
            <person name="Vacherie B."/>
            <person name="Wincker P."/>
            <person name="Weissenbach J."/>
            <person name="Lemaitre B."/>
            <person name="Medigue C."/>
            <person name="Boccard F."/>
        </authorList>
    </citation>
    <scope>NUCLEOTIDE SEQUENCE [LARGE SCALE GENOMIC DNA]</scope>
    <source>
        <strain>L48</strain>
    </source>
</reference>
<proteinExistence type="inferred from homology"/>
<keyword id="KW-0012">Acyltransferase</keyword>
<keyword id="KW-0963">Cytoplasm</keyword>
<keyword id="KW-0441">Lipid A biosynthesis</keyword>
<keyword id="KW-0444">Lipid biosynthesis</keyword>
<keyword id="KW-0443">Lipid metabolism</keyword>
<keyword id="KW-0677">Repeat</keyword>
<keyword id="KW-0808">Transferase</keyword>
<organism>
    <name type="scientific">Pseudomonas entomophila (strain L48)</name>
    <dbReference type="NCBI Taxonomy" id="384676"/>
    <lineage>
        <taxon>Bacteria</taxon>
        <taxon>Pseudomonadati</taxon>
        <taxon>Pseudomonadota</taxon>
        <taxon>Gammaproteobacteria</taxon>
        <taxon>Pseudomonadales</taxon>
        <taxon>Pseudomonadaceae</taxon>
        <taxon>Pseudomonas</taxon>
    </lineage>
</organism>
<dbReference type="EC" id="2.3.1.129" evidence="1"/>
<dbReference type="EMBL" id="CT573326">
    <property type="protein sequence ID" value="CAK16897.1"/>
    <property type="molecule type" value="Genomic_DNA"/>
</dbReference>
<dbReference type="RefSeq" id="WP_011535268.1">
    <property type="nucleotide sequence ID" value="NC_008027.1"/>
</dbReference>
<dbReference type="SMR" id="Q1I638"/>
<dbReference type="STRING" id="384676.PSEEN4208"/>
<dbReference type="GeneID" id="32807215"/>
<dbReference type="KEGG" id="pen:PSEEN4208"/>
<dbReference type="eggNOG" id="COG1043">
    <property type="taxonomic scope" value="Bacteria"/>
</dbReference>
<dbReference type="HOGENOM" id="CLU_061249_0_0_6"/>
<dbReference type="OrthoDB" id="9807278at2"/>
<dbReference type="UniPathway" id="UPA00359">
    <property type="reaction ID" value="UER00477"/>
</dbReference>
<dbReference type="Proteomes" id="UP000000658">
    <property type="component" value="Chromosome"/>
</dbReference>
<dbReference type="GO" id="GO:0005737">
    <property type="term" value="C:cytoplasm"/>
    <property type="evidence" value="ECO:0007669"/>
    <property type="project" value="UniProtKB-SubCell"/>
</dbReference>
<dbReference type="GO" id="GO:0016020">
    <property type="term" value="C:membrane"/>
    <property type="evidence" value="ECO:0007669"/>
    <property type="project" value="GOC"/>
</dbReference>
<dbReference type="GO" id="GO:0008780">
    <property type="term" value="F:acyl-[acyl-carrier-protein]-UDP-N-acetylglucosamine O-acyltransferase activity"/>
    <property type="evidence" value="ECO:0007669"/>
    <property type="project" value="UniProtKB-UniRule"/>
</dbReference>
<dbReference type="GO" id="GO:0009245">
    <property type="term" value="P:lipid A biosynthetic process"/>
    <property type="evidence" value="ECO:0007669"/>
    <property type="project" value="UniProtKB-UniRule"/>
</dbReference>
<dbReference type="CDD" id="cd03351">
    <property type="entry name" value="LbH_UDP-GlcNAc_AT"/>
    <property type="match status" value="1"/>
</dbReference>
<dbReference type="FunFam" id="2.160.10.10:FF:000003">
    <property type="entry name" value="Acyl-[acyl-carrier-protein]--UDP-N-acetylglucosamine O-acyltransferase"/>
    <property type="match status" value="1"/>
</dbReference>
<dbReference type="Gene3D" id="2.160.10.10">
    <property type="entry name" value="Hexapeptide repeat proteins"/>
    <property type="match status" value="1"/>
</dbReference>
<dbReference type="Gene3D" id="1.20.1180.10">
    <property type="entry name" value="Udp N-acetylglucosamine O-acyltransferase, C-terminal domain"/>
    <property type="match status" value="1"/>
</dbReference>
<dbReference type="HAMAP" id="MF_00387">
    <property type="entry name" value="LpxA"/>
    <property type="match status" value="1"/>
</dbReference>
<dbReference type="InterPro" id="IPR029098">
    <property type="entry name" value="Acetyltransf_C"/>
</dbReference>
<dbReference type="InterPro" id="IPR037157">
    <property type="entry name" value="Acetyltransf_C_sf"/>
</dbReference>
<dbReference type="InterPro" id="IPR001451">
    <property type="entry name" value="Hexapep"/>
</dbReference>
<dbReference type="InterPro" id="IPR018357">
    <property type="entry name" value="Hexapep_transf_CS"/>
</dbReference>
<dbReference type="InterPro" id="IPR010137">
    <property type="entry name" value="Lipid_A_LpxA"/>
</dbReference>
<dbReference type="InterPro" id="IPR011004">
    <property type="entry name" value="Trimer_LpxA-like_sf"/>
</dbReference>
<dbReference type="NCBIfam" id="TIGR01852">
    <property type="entry name" value="lipid_A_lpxA"/>
    <property type="match status" value="1"/>
</dbReference>
<dbReference type="NCBIfam" id="NF003657">
    <property type="entry name" value="PRK05289.1"/>
    <property type="match status" value="1"/>
</dbReference>
<dbReference type="PANTHER" id="PTHR43480">
    <property type="entry name" value="ACYL-[ACYL-CARRIER-PROTEIN]--UDP-N-ACETYLGLUCOSAMINE O-ACYLTRANSFERASE"/>
    <property type="match status" value="1"/>
</dbReference>
<dbReference type="PANTHER" id="PTHR43480:SF1">
    <property type="entry name" value="ACYL-[ACYL-CARRIER-PROTEIN]--UDP-N-ACETYLGLUCOSAMINE O-ACYLTRANSFERASE, MITOCHONDRIAL-RELATED"/>
    <property type="match status" value="1"/>
</dbReference>
<dbReference type="Pfam" id="PF13720">
    <property type="entry name" value="Acetyltransf_11"/>
    <property type="match status" value="1"/>
</dbReference>
<dbReference type="Pfam" id="PF00132">
    <property type="entry name" value="Hexapep"/>
    <property type="match status" value="2"/>
</dbReference>
<dbReference type="PIRSF" id="PIRSF000456">
    <property type="entry name" value="UDP-GlcNAc_acltr"/>
    <property type="match status" value="1"/>
</dbReference>
<dbReference type="SUPFAM" id="SSF51161">
    <property type="entry name" value="Trimeric LpxA-like enzymes"/>
    <property type="match status" value="1"/>
</dbReference>
<dbReference type="PROSITE" id="PS00101">
    <property type="entry name" value="HEXAPEP_TRANSFERASES"/>
    <property type="match status" value="1"/>
</dbReference>
<sequence>MSSIDPRAIIDPSAKLAEGVEVGPWSIVGPDVEIGEGTVIGPHVVLKGPTRIGKHNRIYQFSSIGEDTPDMKYKGEPTRLVMGDHNVIREGVTIHRGTIQDRSETTLGDHNLIMAYAHIGHDSVIGNHCILVNNTALAGHVHVGDWAILSGYTLVHQYCHIGAHAFSGMGTAIGKDVPAYVTVFGSPAEARSMNFEGLRRRGFSDEVLHALRRAYKIVYRQGLTVEQAMKELDELVAQFPEVELFRQSIANSARGITR</sequence>
<protein>
    <recommendedName>
        <fullName evidence="1">Acyl-[acyl-carrier-protein]--UDP-N-acetylglucosamine O-acyltransferase</fullName>
        <shortName evidence="1">UDP-N-acetylglucosamine acyltransferase</shortName>
        <ecNumber evidence="1">2.3.1.129</ecNumber>
    </recommendedName>
</protein>
<comment type="function">
    <text evidence="1">Involved in the biosynthesis of lipid A, a phosphorylated glycolipid that anchors the lipopolysaccharide to the outer membrane of the cell.</text>
</comment>
<comment type="catalytic activity">
    <reaction evidence="1">
        <text>a (3R)-hydroxyacyl-[ACP] + UDP-N-acetyl-alpha-D-glucosamine = a UDP-3-O-[(3R)-3-hydroxyacyl]-N-acetyl-alpha-D-glucosamine + holo-[ACP]</text>
        <dbReference type="Rhea" id="RHEA:67812"/>
        <dbReference type="Rhea" id="RHEA-COMP:9685"/>
        <dbReference type="Rhea" id="RHEA-COMP:9945"/>
        <dbReference type="ChEBI" id="CHEBI:57705"/>
        <dbReference type="ChEBI" id="CHEBI:64479"/>
        <dbReference type="ChEBI" id="CHEBI:78827"/>
        <dbReference type="ChEBI" id="CHEBI:173225"/>
        <dbReference type="EC" id="2.3.1.129"/>
    </reaction>
</comment>
<comment type="pathway">
    <text evidence="1">Glycolipid biosynthesis; lipid IV(A) biosynthesis; lipid IV(A) from (3R)-3-hydroxytetradecanoyl-[acyl-carrier-protein] and UDP-N-acetyl-alpha-D-glucosamine: step 1/6.</text>
</comment>
<comment type="subunit">
    <text evidence="1">Homotrimer.</text>
</comment>
<comment type="subcellular location">
    <subcellularLocation>
        <location evidence="1">Cytoplasm</location>
    </subcellularLocation>
</comment>
<comment type="similarity">
    <text evidence="1">Belongs to the transferase hexapeptide repeat family. LpxA subfamily.</text>
</comment>